<feature type="chain" id="PRO_1000080681" description="RNA-binding protein Hfq">
    <location>
        <begin position="1"/>
        <end position="82"/>
    </location>
</feature>
<feature type="domain" description="Sm" evidence="2">
    <location>
        <begin position="11"/>
        <end position="71"/>
    </location>
</feature>
<organism>
    <name type="scientific">Rhodopseudomonas palustris (strain BisB18)</name>
    <dbReference type="NCBI Taxonomy" id="316056"/>
    <lineage>
        <taxon>Bacteria</taxon>
        <taxon>Pseudomonadati</taxon>
        <taxon>Pseudomonadota</taxon>
        <taxon>Alphaproteobacteria</taxon>
        <taxon>Hyphomicrobiales</taxon>
        <taxon>Nitrobacteraceae</taxon>
        <taxon>Rhodopseudomonas</taxon>
    </lineage>
</organism>
<keyword id="KW-0694">RNA-binding</keyword>
<keyword id="KW-0346">Stress response</keyword>
<sequence length="82" mass="9151">MAADRAQNLQDTFLNHVRKTKTPLTIFLVNGVKLQGIVTWFDNFCLLLRRDGHSQLVYKHAISTIMPGAPIQLFEGGEDAPA</sequence>
<gene>
    <name evidence="1" type="primary">hfq</name>
    <name type="ordered locus">RPC_2582</name>
</gene>
<name>HFQ_RHOPB</name>
<evidence type="ECO:0000255" key="1">
    <source>
        <dbReference type="HAMAP-Rule" id="MF_00436"/>
    </source>
</evidence>
<evidence type="ECO:0000255" key="2">
    <source>
        <dbReference type="PROSITE-ProRule" id="PRU01346"/>
    </source>
</evidence>
<proteinExistence type="inferred from homology"/>
<accession>Q214Q4</accession>
<comment type="function">
    <text evidence="1">RNA chaperone that binds small regulatory RNA (sRNAs) and mRNAs to facilitate mRNA translational regulation in response to envelope stress, environmental stress and changes in metabolite concentrations. Also binds with high specificity to tRNAs.</text>
</comment>
<comment type="subunit">
    <text evidence="1">Homohexamer.</text>
</comment>
<comment type="similarity">
    <text evidence="1">Belongs to the Hfq family.</text>
</comment>
<protein>
    <recommendedName>
        <fullName evidence="1">RNA-binding protein Hfq</fullName>
    </recommendedName>
</protein>
<reference key="1">
    <citation type="submission" date="2006-03" db="EMBL/GenBank/DDBJ databases">
        <title>Complete sequence of Rhodopseudomonas palustris BisB18.</title>
        <authorList>
            <consortium name="US DOE Joint Genome Institute"/>
            <person name="Copeland A."/>
            <person name="Lucas S."/>
            <person name="Lapidus A."/>
            <person name="Barry K."/>
            <person name="Detter J.C."/>
            <person name="Glavina del Rio T."/>
            <person name="Hammon N."/>
            <person name="Israni S."/>
            <person name="Dalin E."/>
            <person name="Tice H."/>
            <person name="Pitluck S."/>
            <person name="Chain P."/>
            <person name="Malfatti S."/>
            <person name="Shin M."/>
            <person name="Vergez L."/>
            <person name="Schmutz J."/>
            <person name="Larimer F."/>
            <person name="Land M."/>
            <person name="Hauser L."/>
            <person name="Pelletier D.A."/>
            <person name="Kyrpides N."/>
            <person name="Anderson I."/>
            <person name="Oda Y."/>
            <person name="Harwood C.S."/>
            <person name="Richardson P."/>
        </authorList>
    </citation>
    <scope>NUCLEOTIDE SEQUENCE [LARGE SCALE GENOMIC DNA]</scope>
    <source>
        <strain>BisB18</strain>
    </source>
</reference>
<dbReference type="EMBL" id="CP000301">
    <property type="protein sequence ID" value="ABD88132.1"/>
    <property type="molecule type" value="Genomic_DNA"/>
</dbReference>
<dbReference type="SMR" id="Q214Q4"/>
<dbReference type="STRING" id="316056.RPC_2582"/>
<dbReference type="KEGG" id="rpc:RPC_2582"/>
<dbReference type="eggNOG" id="COG1923">
    <property type="taxonomic scope" value="Bacteria"/>
</dbReference>
<dbReference type="HOGENOM" id="CLU_113688_0_0_5"/>
<dbReference type="OrthoDB" id="9799751at2"/>
<dbReference type="GO" id="GO:0005829">
    <property type="term" value="C:cytosol"/>
    <property type="evidence" value="ECO:0007669"/>
    <property type="project" value="TreeGrafter"/>
</dbReference>
<dbReference type="GO" id="GO:0003723">
    <property type="term" value="F:RNA binding"/>
    <property type="evidence" value="ECO:0007669"/>
    <property type="project" value="UniProtKB-UniRule"/>
</dbReference>
<dbReference type="GO" id="GO:0006355">
    <property type="term" value="P:regulation of DNA-templated transcription"/>
    <property type="evidence" value="ECO:0007669"/>
    <property type="project" value="InterPro"/>
</dbReference>
<dbReference type="GO" id="GO:0043487">
    <property type="term" value="P:regulation of RNA stability"/>
    <property type="evidence" value="ECO:0007669"/>
    <property type="project" value="TreeGrafter"/>
</dbReference>
<dbReference type="GO" id="GO:0045974">
    <property type="term" value="P:regulation of translation, ncRNA-mediated"/>
    <property type="evidence" value="ECO:0007669"/>
    <property type="project" value="TreeGrafter"/>
</dbReference>
<dbReference type="CDD" id="cd01716">
    <property type="entry name" value="Hfq"/>
    <property type="match status" value="1"/>
</dbReference>
<dbReference type="FunFam" id="2.30.30.100:FF:000001">
    <property type="entry name" value="RNA-binding protein Hfq"/>
    <property type="match status" value="1"/>
</dbReference>
<dbReference type="Gene3D" id="2.30.30.100">
    <property type="match status" value="1"/>
</dbReference>
<dbReference type="HAMAP" id="MF_00436">
    <property type="entry name" value="Hfq"/>
    <property type="match status" value="1"/>
</dbReference>
<dbReference type="InterPro" id="IPR005001">
    <property type="entry name" value="Hfq"/>
</dbReference>
<dbReference type="InterPro" id="IPR010920">
    <property type="entry name" value="LSM_dom_sf"/>
</dbReference>
<dbReference type="InterPro" id="IPR047575">
    <property type="entry name" value="Sm"/>
</dbReference>
<dbReference type="NCBIfam" id="TIGR02383">
    <property type="entry name" value="Hfq"/>
    <property type="match status" value="1"/>
</dbReference>
<dbReference type="NCBIfam" id="NF001602">
    <property type="entry name" value="PRK00395.1"/>
    <property type="match status" value="1"/>
</dbReference>
<dbReference type="PANTHER" id="PTHR34772">
    <property type="entry name" value="RNA-BINDING PROTEIN HFQ"/>
    <property type="match status" value="1"/>
</dbReference>
<dbReference type="PANTHER" id="PTHR34772:SF1">
    <property type="entry name" value="RNA-BINDING PROTEIN HFQ"/>
    <property type="match status" value="1"/>
</dbReference>
<dbReference type="Pfam" id="PF17209">
    <property type="entry name" value="Hfq"/>
    <property type="match status" value="1"/>
</dbReference>
<dbReference type="SUPFAM" id="SSF50182">
    <property type="entry name" value="Sm-like ribonucleoproteins"/>
    <property type="match status" value="1"/>
</dbReference>
<dbReference type="PROSITE" id="PS52002">
    <property type="entry name" value="SM"/>
    <property type="match status" value="1"/>
</dbReference>